<sequence>TAPASLYAPSALVLTIGQGESAAATSPLRAVTLTCAPKATGTHPAADAACAELRRAGGDFDALSAADGVMCTREYAPVVVTVDGVWQGRRLSYERTFANECVKNAGSASVFTF</sequence>
<name>SSI2_STRRO</name>
<dbReference type="PIR" id="S42571">
    <property type="entry name" value="S42571"/>
</dbReference>
<dbReference type="SMR" id="P29607"/>
<dbReference type="MEROPS" id="I16.007"/>
<dbReference type="GO" id="GO:0005576">
    <property type="term" value="C:extracellular region"/>
    <property type="evidence" value="ECO:0007669"/>
    <property type="project" value="UniProtKB-SubCell"/>
</dbReference>
<dbReference type="GO" id="GO:0004867">
    <property type="term" value="F:serine-type endopeptidase inhibitor activity"/>
    <property type="evidence" value="ECO:0007669"/>
    <property type="project" value="UniProtKB-UniRule"/>
</dbReference>
<dbReference type="Gene3D" id="3.30.350.10">
    <property type="entry name" value="Subtilisin inhibitor-like"/>
    <property type="match status" value="1"/>
</dbReference>
<dbReference type="HAMAP" id="MF_00778">
    <property type="entry name" value="SSI"/>
    <property type="match status" value="1"/>
</dbReference>
<dbReference type="InterPro" id="IPR000691">
    <property type="entry name" value="Prot_inh_I16_SSI"/>
</dbReference>
<dbReference type="InterPro" id="IPR020054">
    <property type="entry name" value="Prot_inh_SSI_I16_CS"/>
</dbReference>
<dbReference type="InterPro" id="IPR023549">
    <property type="entry name" value="Subtilisin_inhibitor"/>
</dbReference>
<dbReference type="InterPro" id="IPR036819">
    <property type="entry name" value="Subtilisin_inhibitor-like_sf"/>
</dbReference>
<dbReference type="Pfam" id="PF00720">
    <property type="entry name" value="SSI"/>
    <property type="match status" value="1"/>
</dbReference>
<dbReference type="PRINTS" id="PR00294">
    <property type="entry name" value="SSBTLNINHBTR"/>
</dbReference>
<dbReference type="SUPFAM" id="SSF55399">
    <property type="entry name" value="Subtilisin inhibitor"/>
    <property type="match status" value="1"/>
</dbReference>
<dbReference type="PROSITE" id="PS00999">
    <property type="entry name" value="SSI"/>
    <property type="match status" value="1"/>
</dbReference>
<feature type="chain" id="PRO_0000208669" description="Subtilisin inhibitor-like protein 2">
    <location>
        <begin position="1"/>
        <end position="113"/>
    </location>
</feature>
<feature type="site" description="Reactive bond" evidence="1">
    <location>
        <begin position="73"/>
        <end position="74"/>
    </location>
</feature>
<feature type="disulfide bond" evidence="1">
    <location>
        <begin position="35"/>
        <end position="50"/>
    </location>
</feature>
<feature type="disulfide bond" evidence="1">
    <location>
        <begin position="71"/>
        <end position="101"/>
    </location>
</feature>
<organism>
    <name type="scientific">Streptomyces rochei</name>
    <name type="common">Streptomyces parvullus</name>
    <dbReference type="NCBI Taxonomy" id="1928"/>
    <lineage>
        <taxon>Bacteria</taxon>
        <taxon>Bacillati</taxon>
        <taxon>Actinomycetota</taxon>
        <taxon>Actinomycetes</taxon>
        <taxon>Kitasatosporales</taxon>
        <taxon>Streptomycetaceae</taxon>
        <taxon>Streptomyces</taxon>
        <taxon>Streptomyces rochei group</taxon>
    </lineage>
</organism>
<comment type="function">
    <text>Inhibitor of subtilisin BPN' and trypsin.</text>
</comment>
<comment type="subunit">
    <text evidence="1">Homodimer.</text>
</comment>
<comment type="subcellular location">
    <subcellularLocation>
        <location>Secreted</location>
    </subcellularLocation>
</comment>
<comment type="similarity">
    <text evidence="2">Belongs to the protease inhibitor I16 (SSI) family.</text>
</comment>
<reference key="1">
    <citation type="journal article" date="1994" name="Eur. J. Biochem.">
        <title>Comparative studies on the primary structures and inhibitory properties of subtilisin-trypsin inhibitors from Streptomyces.</title>
        <authorList>
            <person name="Taguchi S."/>
            <person name="Kojima S."/>
            <person name="Terabe M."/>
            <person name="Miura K."/>
            <person name="Momose H."/>
        </authorList>
    </citation>
    <scope>PROTEIN SEQUENCE</scope>
    <source>
        <strain>KCC 2283</strain>
    </source>
</reference>
<reference key="2">
    <citation type="journal article" date="1992" name="FEMS Microbiol. Lett.">
        <title>Isolation and partial characterization of SSI-like protease inhibitors from Streptomyces.</title>
        <authorList>
            <person name="Taguchi S."/>
            <person name="Kojima S."/>
            <person name="Kumagai I."/>
            <person name="Ogawara H."/>
            <person name="Miura K."/>
            <person name="Momose H."/>
        </authorList>
    </citation>
    <scope>PROTEIN SEQUENCE OF 1-39</scope>
</reference>
<reference key="3">
    <citation type="journal article" date="1993" name="Biosci. Biotechnol. Biochem.">
        <title>High frequency of SSI-like protease inhibitors among Streptomyces.</title>
        <authorList>
            <person name="Taguchi S."/>
            <person name="Kikuchi H."/>
            <person name="Kojima S."/>
            <person name="Kumagai I."/>
            <person name="Nakase T."/>
            <person name="Miura K."/>
            <person name="Momose H."/>
        </authorList>
    </citation>
    <scope>PROTEIN SEQUENCE OF 1-39</scope>
    <source>
        <strain>KCC 2283</strain>
    </source>
</reference>
<accession>P29607</accession>
<accession>Q9R2G7</accession>
<keyword id="KW-0903">Direct protein sequencing</keyword>
<keyword id="KW-1015">Disulfide bond</keyword>
<keyword id="KW-0646">Protease inhibitor</keyword>
<keyword id="KW-0964">Secreted</keyword>
<keyword id="KW-0722">Serine protease inhibitor</keyword>
<proteinExistence type="evidence at protein level"/>
<protein>
    <recommendedName>
        <fullName>Subtilisin inhibitor-like protein 2</fullName>
        <shortName>SIL-2</shortName>
        <shortName>SIL2</shortName>
    </recommendedName>
</protein>
<evidence type="ECO:0000250" key="1"/>
<evidence type="ECO:0000305" key="2"/>